<evidence type="ECO:0000255" key="1">
    <source>
        <dbReference type="HAMAP-Rule" id="MF_00201"/>
    </source>
</evidence>
<protein>
    <recommendedName>
        <fullName evidence="1">DNA repair protein RecO</fullName>
    </recommendedName>
    <alternativeName>
        <fullName evidence="1">Recombination protein O</fullName>
    </alternativeName>
</protein>
<gene>
    <name evidence="1" type="primary">recO</name>
    <name type="ordered locus">AFE_1402</name>
</gene>
<accession>B7J9K3</accession>
<comment type="function">
    <text evidence="1">Involved in DNA repair and RecF pathway recombination.</text>
</comment>
<comment type="similarity">
    <text evidence="1">Belongs to the RecO family.</text>
</comment>
<proteinExistence type="inferred from homology"/>
<sequence>MTTEPGDRAWVLHHYPYGDTSLIVELFTRTQGRLGVLAKGARRARSALARIEAGRPLWVRWLGRGELPVLAQAEELGPFLPLNPLQNLSLFYVNELLLRLTQRRDPFPDLFQVYEETIDALCSEPGEGWYLRRFERRLLENLGWAPDLAHCAECGRSPDAASSEHWLYQAAHGVFCRAHAPDAAVAIEAAALVWLRGAMQTRSMPVWNSSLRRCLEQELLVHLGGRPLESRRLLTAYLRRTQPAMTIQKREEHSE</sequence>
<feature type="chain" id="PRO_1000193345" description="DNA repair protein RecO">
    <location>
        <begin position="1"/>
        <end position="255"/>
    </location>
</feature>
<name>RECO_ACIF2</name>
<keyword id="KW-0227">DNA damage</keyword>
<keyword id="KW-0233">DNA recombination</keyword>
<keyword id="KW-0234">DNA repair</keyword>
<keyword id="KW-1185">Reference proteome</keyword>
<organism>
    <name type="scientific">Acidithiobacillus ferrooxidans (strain ATCC 23270 / DSM 14882 / CIP 104768 / NCIMB 8455)</name>
    <name type="common">Ferrobacillus ferrooxidans (strain ATCC 23270)</name>
    <dbReference type="NCBI Taxonomy" id="243159"/>
    <lineage>
        <taxon>Bacteria</taxon>
        <taxon>Pseudomonadati</taxon>
        <taxon>Pseudomonadota</taxon>
        <taxon>Acidithiobacillia</taxon>
        <taxon>Acidithiobacillales</taxon>
        <taxon>Acidithiobacillaceae</taxon>
        <taxon>Acidithiobacillus</taxon>
    </lineage>
</organism>
<dbReference type="EMBL" id="CP001219">
    <property type="protein sequence ID" value="ACK78486.1"/>
    <property type="molecule type" value="Genomic_DNA"/>
</dbReference>
<dbReference type="RefSeq" id="WP_012536499.1">
    <property type="nucleotide sequence ID" value="NC_011761.1"/>
</dbReference>
<dbReference type="SMR" id="B7J9K3"/>
<dbReference type="STRING" id="243159.AFE_1402"/>
<dbReference type="PaxDb" id="243159-AFE_1402"/>
<dbReference type="GeneID" id="65280633"/>
<dbReference type="KEGG" id="afr:AFE_1402"/>
<dbReference type="eggNOG" id="COG1381">
    <property type="taxonomic scope" value="Bacteria"/>
</dbReference>
<dbReference type="HOGENOM" id="CLU_066645_1_0_6"/>
<dbReference type="Proteomes" id="UP000001362">
    <property type="component" value="Chromosome"/>
</dbReference>
<dbReference type="GO" id="GO:0043590">
    <property type="term" value="C:bacterial nucleoid"/>
    <property type="evidence" value="ECO:0007669"/>
    <property type="project" value="TreeGrafter"/>
</dbReference>
<dbReference type="GO" id="GO:0006310">
    <property type="term" value="P:DNA recombination"/>
    <property type="evidence" value="ECO:0007669"/>
    <property type="project" value="UniProtKB-UniRule"/>
</dbReference>
<dbReference type="GO" id="GO:0006302">
    <property type="term" value="P:double-strand break repair"/>
    <property type="evidence" value="ECO:0007669"/>
    <property type="project" value="TreeGrafter"/>
</dbReference>
<dbReference type="Gene3D" id="2.40.50.140">
    <property type="entry name" value="Nucleic acid-binding proteins"/>
    <property type="match status" value="1"/>
</dbReference>
<dbReference type="Gene3D" id="1.20.1440.120">
    <property type="entry name" value="Recombination protein O, C-terminal domain"/>
    <property type="match status" value="1"/>
</dbReference>
<dbReference type="HAMAP" id="MF_00201">
    <property type="entry name" value="RecO"/>
    <property type="match status" value="1"/>
</dbReference>
<dbReference type="InterPro" id="IPR037278">
    <property type="entry name" value="ARFGAP/RecO"/>
</dbReference>
<dbReference type="InterPro" id="IPR022572">
    <property type="entry name" value="DNA_rep/recomb_RecO_N"/>
</dbReference>
<dbReference type="InterPro" id="IPR012340">
    <property type="entry name" value="NA-bd_OB-fold"/>
</dbReference>
<dbReference type="InterPro" id="IPR003717">
    <property type="entry name" value="RecO"/>
</dbReference>
<dbReference type="InterPro" id="IPR042242">
    <property type="entry name" value="RecO_C"/>
</dbReference>
<dbReference type="NCBIfam" id="TIGR00613">
    <property type="entry name" value="reco"/>
    <property type="match status" value="1"/>
</dbReference>
<dbReference type="PANTHER" id="PTHR33991">
    <property type="entry name" value="DNA REPAIR PROTEIN RECO"/>
    <property type="match status" value="1"/>
</dbReference>
<dbReference type="PANTHER" id="PTHR33991:SF1">
    <property type="entry name" value="DNA REPAIR PROTEIN RECO"/>
    <property type="match status" value="1"/>
</dbReference>
<dbReference type="Pfam" id="PF02565">
    <property type="entry name" value="RecO_C"/>
    <property type="match status" value="1"/>
</dbReference>
<dbReference type="Pfam" id="PF11967">
    <property type="entry name" value="RecO_N"/>
    <property type="match status" value="1"/>
</dbReference>
<dbReference type="SUPFAM" id="SSF57863">
    <property type="entry name" value="ArfGap/RecO-like zinc finger"/>
    <property type="match status" value="1"/>
</dbReference>
<dbReference type="SUPFAM" id="SSF50249">
    <property type="entry name" value="Nucleic acid-binding proteins"/>
    <property type="match status" value="1"/>
</dbReference>
<reference key="1">
    <citation type="journal article" date="2008" name="BMC Genomics">
        <title>Acidithiobacillus ferrooxidans metabolism: from genome sequence to industrial applications.</title>
        <authorList>
            <person name="Valdes J."/>
            <person name="Pedroso I."/>
            <person name="Quatrini R."/>
            <person name="Dodson R.J."/>
            <person name="Tettelin H."/>
            <person name="Blake R. II"/>
            <person name="Eisen J.A."/>
            <person name="Holmes D.S."/>
        </authorList>
    </citation>
    <scope>NUCLEOTIDE SEQUENCE [LARGE SCALE GENOMIC DNA]</scope>
    <source>
        <strain>ATCC 23270 / DSM 14882 / CIP 104768 / NCIMB 8455</strain>
    </source>
</reference>